<keyword id="KW-0966">Cell projection</keyword>
<keyword id="KW-0970">Cilium biogenesis/degradation</keyword>
<keyword id="KW-0175">Coiled coil</keyword>
<keyword id="KW-0963">Cytoplasm</keyword>
<keyword id="KW-0206">Cytoskeleton</keyword>
<keyword id="KW-0597">Phosphoprotein</keyword>
<keyword id="KW-1185">Reference proteome</keyword>
<comment type="function">
    <text evidence="2 6 7 8">Required for ciliogenesis and sonic hedgehog/SHH signaling (PubMed:21750036). Required for the centrosomal recruitment of RAB8A and for the targeting of centriole satellite proteins to centrosomes such as of PCM1. May play a role in early ciliogenesis in the disappearance of centriolar satellites that preceeds ciliary vesicle formation (By similarity). Involved in regulation of cell intracellular organization (PubMed:26386247). Involved in regulation of cell polarity (By similarity). Required for asymmetrical localization of CEP120 to daughter centrioles (PubMed:25251415).</text>
</comment>
<comment type="subunit">
    <text evidence="3 7">Interacts with CEP120 (PubMed:25251415). Interacts with CCP110, CEP290, CEP97, KIF24 (By similarity).</text>
</comment>
<comment type="interaction">
    <interactant intactId="EBI-11692182">
        <id>E9PV87</id>
    </interactant>
    <interactant intactId="EBI-2553947">
        <id>Q7TSG1</id>
        <label>Cep120</label>
    </interactant>
    <organismsDiffer>false</organismsDiffer>
    <experiments>3</experiments>
</comment>
<comment type="subcellular location">
    <subcellularLocation>
        <location evidence="3">Cytoplasm</location>
        <location evidence="3">Cytoskeleton</location>
        <location evidence="3">Microtubule organizing center</location>
        <location evidence="3">Centrosome</location>
    </subcellularLocation>
    <subcellularLocation>
        <location evidence="8">Photoreceptor inner segment</location>
    </subcellularLocation>
    <subcellularLocation>
        <location evidence="8">Cytoplasm</location>
        <location evidence="8">Cytoskeleton</location>
        <location evidence="8">Microtubule organizing center</location>
        <location evidence="8">Centrosome</location>
        <location evidence="8">Centriole</location>
    </subcellularLocation>
    <subcellularLocation>
        <location evidence="8">Cytoplasm</location>
        <location evidence="8">Cytoskeleton</location>
        <location evidence="8">Cilium basal body</location>
    </subcellularLocation>
    <text evidence="8">In photoreceptor cells localized to the joint between the inner and outer segments, specifically localized at the mother centriole (basal body) and the adjacent centriole as well as between the two centrioles but not in the connecting cilium (PubMed:26386247).</text>
</comment>
<comment type="tissue specificity">
    <text evidence="8">Expressed in photoreceptor cells (at protein level).</text>
</comment>
<comment type="disruption phenotype">
    <text evidence="6">Deficient mice die during organogenesis, lack cilia, and have randomized left-right patterning, pericardial edema and hemorrhages.</text>
</comment>
<comment type="similarity">
    <text evidence="9">Belongs to the TALPID3 family.</text>
</comment>
<comment type="sequence caution" evidence="9">
    <conflict type="erroneous initiation">
        <sequence resource="EMBL-CDS" id="AAI50745"/>
    </conflict>
    <text>Truncated N-terminus.</text>
</comment>
<proteinExistence type="evidence at protein level"/>
<organism>
    <name type="scientific">Mus musculus</name>
    <name type="common">Mouse</name>
    <dbReference type="NCBI Taxonomy" id="10090"/>
    <lineage>
        <taxon>Eukaryota</taxon>
        <taxon>Metazoa</taxon>
        <taxon>Chordata</taxon>
        <taxon>Craniata</taxon>
        <taxon>Vertebrata</taxon>
        <taxon>Euteleostomi</taxon>
        <taxon>Mammalia</taxon>
        <taxon>Eutheria</taxon>
        <taxon>Euarchontoglires</taxon>
        <taxon>Glires</taxon>
        <taxon>Rodentia</taxon>
        <taxon>Myomorpha</taxon>
        <taxon>Muroidea</taxon>
        <taxon>Muridae</taxon>
        <taxon>Murinae</taxon>
        <taxon>Mus</taxon>
        <taxon>Mus</taxon>
    </lineage>
</organism>
<feature type="chain" id="PRO_0000420181" description="Protein TALPID3">
    <location>
        <begin position="1"/>
        <end position="1520"/>
    </location>
</feature>
<feature type="region of interest" description="Disordered" evidence="5">
    <location>
        <begin position="322"/>
        <end position="370"/>
    </location>
</feature>
<feature type="region of interest" description="Required for centrosomal localization" evidence="1">
    <location>
        <begin position="485"/>
        <end position="572"/>
    </location>
</feature>
<feature type="region of interest" description="Disordered" evidence="5">
    <location>
        <begin position="568"/>
        <end position="632"/>
    </location>
</feature>
<feature type="region of interest" description="Disordered" evidence="5">
    <location>
        <begin position="759"/>
        <end position="793"/>
    </location>
</feature>
<feature type="region of interest" description="Disordered" evidence="5">
    <location>
        <begin position="826"/>
        <end position="848"/>
    </location>
</feature>
<feature type="region of interest" description="Disordered" evidence="5">
    <location>
        <begin position="1060"/>
        <end position="1093"/>
    </location>
</feature>
<feature type="region of interest" description="Disordered" evidence="5">
    <location>
        <begin position="1145"/>
        <end position="1170"/>
    </location>
</feature>
<feature type="region of interest" description="Disordered" evidence="5">
    <location>
        <begin position="1184"/>
        <end position="1230"/>
    </location>
</feature>
<feature type="region of interest" description="Disordered" evidence="5">
    <location>
        <begin position="1500"/>
        <end position="1520"/>
    </location>
</feature>
<feature type="coiled-coil region" evidence="4">
    <location>
        <begin position="487"/>
        <end position="519"/>
    </location>
</feature>
<feature type="compositionally biased region" description="Basic and acidic residues" evidence="5">
    <location>
        <begin position="350"/>
        <end position="367"/>
    </location>
</feature>
<feature type="compositionally biased region" description="Polar residues" evidence="5">
    <location>
        <begin position="587"/>
        <end position="596"/>
    </location>
</feature>
<feature type="compositionally biased region" description="Polar residues" evidence="5">
    <location>
        <begin position="605"/>
        <end position="616"/>
    </location>
</feature>
<feature type="compositionally biased region" description="Polar residues" evidence="5">
    <location>
        <begin position="826"/>
        <end position="836"/>
    </location>
</feature>
<feature type="compositionally biased region" description="Pro residues" evidence="5">
    <location>
        <begin position="1060"/>
        <end position="1069"/>
    </location>
</feature>
<feature type="compositionally biased region" description="Pro residues" evidence="5">
    <location>
        <begin position="1195"/>
        <end position="1205"/>
    </location>
</feature>
<feature type="compositionally biased region" description="Polar residues" evidence="5">
    <location>
        <begin position="1217"/>
        <end position="1230"/>
    </location>
</feature>
<feature type="modified residue" description="Phosphoserine" evidence="3">
    <location>
        <position position="426"/>
    </location>
</feature>
<feature type="modified residue" description="Phosphothreonine" evidence="10">
    <location>
        <position position="1060"/>
    </location>
</feature>
<feature type="modified residue" description="Phosphothreonine" evidence="10">
    <location>
        <position position="1064"/>
    </location>
</feature>
<feature type="modified residue" description="Phosphoserine" evidence="10">
    <location>
        <position position="1068"/>
    </location>
</feature>
<feature type="modified residue" description="Phosphothreonine" evidence="10">
    <location>
        <position position="1080"/>
    </location>
</feature>
<feature type="modified residue" description="Phosphoserine" evidence="10">
    <location>
        <position position="1083"/>
    </location>
</feature>
<feature type="sequence conflict" description="In Ref. 2; AAI50745." evidence="9" ref="2">
    <original>A</original>
    <variation>V</variation>
    <location>
        <position position="1127"/>
    </location>
</feature>
<feature type="sequence conflict" description="In Ref. 2; AAI50745." evidence="9" ref="2">
    <original>L</original>
    <variation>F</variation>
    <location>
        <position position="1134"/>
    </location>
</feature>
<name>TALD3_MOUSE</name>
<evidence type="ECO:0000250" key="1"/>
<evidence type="ECO:0000250" key="2">
    <source>
        <dbReference type="UniProtKB" id="Q1G7G9"/>
    </source>
</evidence>
<evidence type="ECO:0000250" key="3">
    <source>
        <dbReference type="UniProtKB" id="Q9BVV6"/>
    </source>
</evidence>
<evidence type="ECO:0000255" key="4"/>
<evidence type="ECO:0000256" key="5">
    <source>
        <dbReference type="SAM" id="MobiDB-lite"/>
    </source>
</evidence>
<evidence type="ECO:0000269" key="6">
    <source>
    </source>
</evidence>
<evidence type="ECO:0000269" key="7">
    <source>
    </source>
</evidence>
<evidence type="ECO:0000269" key="8">
    <source>
    </source>
</evidence>
<evidence type="ECO:0000305" key="9"/>
<evidence type="ECO:0007744" key="10">
    <source>
    </source>
</evidence>
<protein>
    <recommendedName>
        <fullName>Protein TALPID3</fullName>
    </recommendedName>
</protein>
<gene>
    <name type="primary">Talpid3</name>
</gene>
<sequence>MKNVEFSLERGQRLKMPARKLREIVSPNQGNKLAVVEDELPRVPPALAANKRLAVETRTSSNGTLCGSLDLTSARLYHQPLLESPPASKKSDFSKDAVVRQLPLNKTEENNAPKANDIFISQYTMGQKDALRTVLKQKAQSMPVFKAVKVHLFEDTSTEKNTVAQETETPPNRIDSATTVAAATAAAIATAAPLIKVQSDLEAKVNCVGELLTKLQETDKQLQRVTEHQASVQSKQEKVHCHDHDKQMNAFMEQHIRHLEKLQQQQIDIQTHFIDAALKASSLQLGMSTSRAVGKYSGKLGSPSVGSSVFSHNTFVSKRVPLSEDTDFDGQKSPLETPAPRRFAPVPVSRDGKITKRESPTEEKENMEMNSPKGNVRLLEQVLNSNECLTRKTESSDITSLTQPKMGWNLEKRDSTETLHSQIFPSSEERGTAQVPVPKYNDVVHDLGQKKQASDMLQIKQSPVTLRLSDHPHNPALLQTTNTRSVLKDAAKILRGVQNNKKVLEENLEAIVRAKDGAAMYSFINALATNREMSEKIRIRKQVDEWIKIISAEIQDELMRKDYEQKRFDPKNQRNKKALTMSRDIKANNQEKTVNRSVIPRSHYQKQTQEQFTSPPVRNLPASGPQKERSGLLKSATTLQDEDYMLQIYGKPVYQGHRSTLKKGPYLRFSSPSPKAKPQRPRVIELVKGTKVKSAKTQTDFHAASRMKMDSKIQHPITALPHADQQYMVSPSREMPTVSGTLEGHLIPMAILLGQTQSNSDSMPPAGVTVNKPRPVTVTTSIPPASRKGNAGVKKPNVAIVEMKSEKKDPPQLSVQILPSVDIDSVSYSSTDGASSPPSPKEASLPPLHTWIQTPDFMKVDEEEVPLPGTNFDEVIDVIQEEEKRDEIPECSAPMLEFNRSVKVVPTKYNGPSFPPVVSAYHPTTDILDKVIERKETLENSLIQWVEQEIMSRIISGLFPLQQQARLDASVSVSEASEPSASDIVAGTSSGALQRMVDARVPVNSDMVSHFVNEALTETIAVMLADREAERQRAAATSVPGDLSGTETNLLARVCAPVATPQPTPPCSPSPVREHVRVKTPDSSPCESDPDAASSIKEIRVEKGSDMPAVMLVSTPTRTPVATPPPAAALTPTLSETSIDKLKLSSPELPKPWDSGDLPLDEENPNSLQELPHPRAVVMSVANEEPESVDFSAQPAPPEPAPSAPLPEGTKAPSLQRVPSSGSSTLENTLSTVTETETLDRHISEGEILFSCGQNLATKRPGDLFLMNINDSLSSTLQDALEMEDDPPSEGQVIRRPHKKRHEDAIVALLTKQQRELLVSQQEEDLDNSVGELSEGQRLVLKAAEDISAGPSGQMLPPTSPAEPSYQHADPRLVLQQSDMASGNICEDLCASHGPMSLRELELQPDSNLILPITHTTTAVSDGNLPEAAEDFSQYQQKQDSDIKQVEHKPIQRHLTSVRNKPDSTLSQHQGGPADLLLIAHVSPARMSVTLPSANLEDCSQSLSTSSMHGGTESSGTDTF</sequence>
<accession>E9PV87</accession>
<accession>B2RWX3</accession>
<reference key="1">
    <citation type="journal article" date="2009" name="PLoS Biol.">
        <title>Lineage-specific biology revealed by a finished genome assembly of the mouse.</title>
        <authorList>
            <person name="Church D.M."/>
            <person name="Goodstadt L."/>
            <person name="Hillier L.W."/>
            <person name="Zody M.C."/>
            <person name="Goldstein S."/>
            <person name="She X."/>
            <person name="Bult C.J."/>
            <person name="Agarwala R."/>
            <person name="Cherry J.L."/>
            <person name="DiCuccio M."/>
            <person name="Hlavina W."/>
            <person name="Kapustin Y."/>
            <person name="Meric P."/>
            <person name="Maglott D."/>
            <person name="Birtle Z."/>
            <person name="Marques A.C."/>
            <person name="Graves T."/>
            <person name="Zhou S."/>
            <person name="Teague B."/>
            <person name="Potamousis K."/>
            <person name="Churas C."/>
            <person name="Place M."/>
            <person name="Herschleb J."/>
            <person name="Runnheim R."/>
            <person name="Forrest D."/>
            <person name="Amos-Landgraf J."/>
            <person name="Schwartz D.C."/>
            <person name="Cheng Z."/>
            <person name="Lindblad-Toh K."/>
            <person name="Eichler E.E."/>
            <person name="Ponting C.P."/>
        </authorList>
    </citation>
    <scope>NUCLEOTIDE SEQUENCE [LARGE SCALE GENOMIC DNA]</scope>
    <source>
        <strain>C57BL/6J</strain>
    </source>
</reference>
<reference key="2">
    <citation type="journal article" date="2004" name="Genome Res.">
        <title>The status, quality, and expansion of the NIH full-length cDNA project: the Mammalian Gene Collection (MGC).</title>
        <authorList>
            <consortium name="The MGC Project Team"/>
        </authorList>
    </citation>
    <scope>NUCLEOTIDE SEQUENCE [LARGE SCALE MRNA]</scope>
    <source>
        <tissue>Brain</tissue>
    </source>
</reference>
<reference key="3">
    <citation type="journal article" date="2010" name="Cell">
        <title>A tissue-specific atlas of mouse protein phosphorylation and expression.</title>
        <authorList>
            <person name="Huttlin E.L."/>
            <person name="Jedrychowski M.P."/>
            <person name="Elias J.E."/>
            <person name="Goswami T."/>
            <person name="Rad R."/>
            <person name="Beausoleil S.A."/>
            <person name="Villen J."/>
            <person name="Haas W."/>
            <person name="Sowa M.E."/>
            <person name="Gygi S.P."/>
        </authorList>
    </citation>
    <scope>PHOSPHORYLATION [LARGE SCALE ANALYSIS] AT THR-1060; THR-1064; SER-1068; THR-1080 AND SER-1083</scope>
    <scope>IDENTIFICATION BY MASS SPECTROMETRY [LARGE SCALE ANALYSIS]</scope>
    <source>
        <tissue>Kidney</tissue>
        <tissue>Lung</tissue>
        <tissue>Spleen</tissue>
        <tissue>Testis</tissue>
    </source>
</reference>
<reference key="4">
    <citation type="journal article" date="2011" name="Development">
        <title>Generation of mice with functional inactivation of talpid3, a gene first identified in chicken.</title>
        <authorList>
            <person name="Bangs F."/>
            <person name="Antonio N."/>
            <person name="Thongnuek P."/>
            <person name="Welten M."/>
            <person name="Davey M.G."/>
            <person name="Briscoe J."/>
            <person name="Tickle C."/>
        </authorList>
    </citation>
    <scope>DISRUPTION PHENOTYPE</scope>
    <scope>FUNCTION</scope>
</reference>
<reference key="5">
    <citation type="journal article" date="2014" name="PLoS ONE">
        <title>Talpid3-binding centrosomal protein Cep120 is required for centriole duplication and proliferation of cerebellar granule neuron progenitors.</title>
        <authorList>
            <person name="Wu C."/>
            <person name="Yang M."/>
            <person name="Li J."/>
            <person name="Wang C."/>
            <person name="Cao T."/>
            <person name="Tao K."/>
            <person name="Wang B."/>
        </authorList>
    </citation>
    <scope>FUNCTION</scope>
    <scope>INTERACTION WITH CEP120</scope>
</reference>
<reference key="6">
    <citation type="journal article" date="2015" name="Elife">
        <title>TALPID3 controls centrosome and cell polarity and the human ortholog KIAA0586 is mutated in Joubert syndrome (JBTS23).</title>
        <authorList>
            <person name="Stephen L.A."/>
            <person name="Tawamie H."/>
            <person name="Davis G.M."/>
            <person name="Tebbe L."/>
            <person name="Nuernberg P."/>
            <person name="Nuernberg G."/>
            <person name="Thiele H."/>
            <person name="Thoenes M."/>
            <person name="Boltshauser E."/>
            <person name="Uebe S."/>
            <person name="Rompel O."/>
            <person name="Reis A."/>
            <person name="Ekici A.B."/>
            <person name="McTeir L."/>
            <person name="Fraser A.M."/>
            <person name="Hall E.A."/>
            <person name="Mill P."/>
            <person name="Daudet N."/>
            <person name="Cross C."/>
            <person name="Wolfrum U."/>
            <person name="Jamra R.A."/>
            <person name="Davey M.G."/>
            <person name="Bolz H.J."/>
        </authorList>
    </citation>
    <scope>FUNCTION</scope>
    <scope>SUBCELLULAR LOCATION</scope>
    <scope>INVOLVEMENT IN JBTS23</scope>
</reference>
<dbReference type="EMBL" id="AC159620">
    <property type="status" value="NOT_ANNOTATED_CDS"/>
    <property type="molecule type" value="Genomic_DNA"/>
</dbReference>
<dbReference type="EMBL" id="BC150744">
    <property type="protein sequence ID" value="AAI50745.1"/>
    <property type="status" value="ALT_INIT"/>
    <property type="molecule type" value="mRNA"/>
</dbReference>
<dbReference type="CCDS" id="CCDS49081.1"/>
<dbReference type="RefSeq" id="NP_001156850.1">
    <property type="nucleotide sequence ID" value="NM_001163378.1"/>
</dbReference>
<dbReference type="SMR" id="E9PV87"/>
<dbReference type="FunCoup" id="E9PV87">
    <property type="interactions" value="1992"/>
</dbReference>
<dbReference type="IntAct" id="E9PV87">
    <property type="interactions" value="1"/>
</dbReference>
<dbReference type="STRING" id="10090.ENSMUSP00000118956"/>
<dbReference type="GlyGen" id="E9PV87">
    <property type="glycosylation" value="1 site"/>
</dbReference>
<dbReference type="iPTMnet" id="E9PV87"/>
<dbReference type="PhosphoSitePlus" id="E9PV87"/>
<dbReference type="jPOST" id="E9PV87"/>
<dbReference type="PaxDb" id="10090-ENSMUSP00000118956"/>
<dbReference type="PeptideAtlas" id="E9PV87"/>
<dbReference type="ProteomicsDB" id="263123"/>
<dbReference type="Pumba" id="E9PV87"/>
<dbReference type="Antibodypedia" id="21">
    <property type="antibodies" value="15 antibodies from 11 providers"/>
</dbReference>
<dbReference type="Ensembl" id="ENSMUST00000149564.8">
    <property type="protein sequence ID" value="ENSMUSP00000118956.2"/>
    <property type="gene ID" value="ENSMUSG00000034601.18"/>
</dbReference>
<dbReference type="GeneID" id="76967"/>
<dbReference type="KEGG" id="mmu:76967"/>
<dbReference type="UCSC" id="uc007nun.2">
    <property type="organism name" value="mouse"/>
</dbReference>
<dbReference type="AGR" id="MGI:1924217"/>
<dbReference type="MGI" id="MGI:1924217">
    <property type="gene designation" value="2700049A03Rik"/>
</dbReference>
<dbReference type="VEuPathDB" id="HostDB:ENSMUSG00000034601"/>
<dbReference type="eggNOG" id="ENOG502QUXJ">
    <property type="taxonomic scope" value="Eukaryota"/>
</dbReference>
<dbReference type="GeneTree" id="ENSGT00390000012397"/>
<dbReference type="InParanoid" id="E9PV87"/>
<dbReference type="OMA" id="SARNYHQ"/>
<dbReference type="OrthoDB" id="10057439at2759"/>
<dbReference type="TreeFam" id="TF332939"/>
<dbReference type="BioGRID-ORCS" id="76967">
    <property type="hits" value="5 hits in 77 CRISPR screens"/>
</dbReference>
<dbReference type="ChiTaRS" id="2700049A03Rik">
    <property type="organism name" value="mouse"/>
</dbReference>
<dbReference type="PRO" id="PR:E9PV87"/>
<dbReference type="Proteomes" id="UP000000589">
    <property type="component" value="Chromosome 12"/>
</dbReference>
<dbReference type="RNAct" id="E9PV87">
    <property type="molecule type" value="protein"/>
</dbReference>
<dbReference type="Bgee" id="ENSMUSG00000034601">
    <property type="expression patterns" value="Expressed in animal zygote and 164 other cell types or tissues"/>
</dbReference>
<dbReference type="ExpressionAtlas" id="E9PV87">
    <property type="expression patterns" value="baseline and differential"/>
</dbReference>
<dbReference type="GO" id="GO:0005814">
    <property type="term" value="C:centriole"/>
    <property type="evidence" value="ECO:0007669"/>
    <property type="project" value="UniProtKB-SubCell"/>
</dbReference>
<dbReference type="GO" id="GO:0005813">
    <property type="term" value="C:centrosome"/>
    <property type="evidence" value="ECO:0000314"/>
    <property type="project" value="MGI"/>
</dbReference>
<dbReference type="GO" id="GO:0036064">
    <property type="term" value="C:ciliary basal body"/>
    <property type="evidence" value="ECO:0000266"/>
    <property type="project" value="MGI"/>
</dbReference>
<dbReference type="GO" id="GO:0005737">
    <property type="term" value="C:cytoplasm"/>
    <property type="evidence" value="ECO:0007669"/>
    <property type="project" value="UniProtKB-KW"/>
</dbReference>
<dbReference type="GO" id="GO:0001917">
    <property type="term" value="C:photoreceptor inner segment"/>
    <property type="evidence" value="ECO:0007669"/>
    <property type="project" value="UniProtKB-SubCell"/>
</dbReference>
<dbReference type="GO" id="GO:0060271">
    <property type="term" value="P:cilium assembly"/>
    <property type="evidence" value="ECO:0000315"/>
    <property type="project" value="UniProtKB"/>
</dbReference>
<dbReference type="GO" id="GO:0070201">
    <property type="term" value="P:regulation of establishment of protein localization"/>
    <property type="evidence" value="ECO:0000266"/>
    <property type="project" value="MGI"/>
</dbReference>
<dbReference type="GO" id="GO:0007224">
    <property type="term" value="P:smoothened signaling pathway"/>
    <property type="evidence" value="ECO:0000315"/>
    <property type="project" value="UniProtKB"/>
</dbReference>
<dbReference type="InterPro" id="IPR029246">
    <property type="entry name" value="TALPID3"/>
</dbReference>
<dbReference type="PANTHER" id="PTHR15721">
    <property type="entry name" value="KIAA0586 PROTEIN"/>
    <property type="match status" value="1"/>
</dbReference>
<dbReference type="PANTHER" id="PTHR15721:SF2">
    <property type="entry name" value="PROTEIN TALPID3"/>
    <property type="match status" value="1"/>
</dbReference>
<dbReference type="Pfam" id="PF15324">
    <property type="entry name" value="TALPID3"/>
    <property type="match status" value="1"/>
</dbReference>